<gene>
    <name evidence="1" type="primary">kdsA</name>
    <name type="ordered locus">VV1_0249</name>
</gene>
<feature type="chain" id="PRO_0000187170" description="2-dehydro-3-deoxyphosphooctonate aldolase">
    <location>
        <begin position="1"/>
        <end position="284"/>
    </location>
</feature>
<proteinExistence type="inferred from homology"/>
<sequence>MMEQKIVQIGDIPVANDKPFTLFAGMNVLESRDLAMQICEHYVKVTDKLGIPYVFKASFDKANRSSVHSYRGPGLEEGMKIFQELKDTFGVKIITDVHTEAQAQPVADVVDVIQLPAFLARQTDLVEAMAKTGAVINVKKPQFMSPGQVGNIVEKFAECGNDKIILCERGSCHGYDNLVVDMLGFGVMKKASKGSPIIFDVTHSLQMRDPSGAASGGRREQTVELAKAGLATGIAGLFIEAHPNPDQARCDGPSALPLDKLEPFLAQMKALDDLVKSFASIDIR</sequence>
<keyword id="KW-0963">Cytoplasm</keyword>
<keyword id="KW-0448">Lipopolysaccharide biosynthesis</keyword>
<keyword id="KW-0808">Transferase</keyword>
<dbReference type="EC" id="2.5.1.55" evidence="1"/>
<dbReference type="EMBL" id="AE016795">
    <property type="protein sequence ID" value="AAO08785.1"/>
    <property type="molecule type" value="Genomic_DNA"/>
</dbReference>
<dbReference type="SMR" id="Q8DFG3"/>
<dbReference type="KEGG" id="vvu:VV1_0249"/>
<dbReference type="HOGENOM" id="CLU_036666_0_0_6"/>
<dbReference type="UniPathway" id="UPA00030"/>
<dbReference type="UniPathway" id="UPA00357">
    <property type="reaction ID" value="UER00474"/>
</dbReference>
<dbReference type="Proteomes" id="UP000002275">
    <property type="component" value="Chromosome 1"/>
</dbReference>
<dbReference type="GO" id="GO:0005737">
    <property type="term" value="C:cytoplasm"/>
    <property type="evidence" value="ECO:0007669"/>
    <property type="project" value="UniProtKB-SubCell"/>
</dbReference>
<dbReference type="GO" id="GO:0008676">
    <property type="term" value="F:3-deoxy-8-phosphooctulonate synthase activity"/>
    <property type="evidence" value="ECO:0007669"/>
    <property type="project" value="UniProtKB-UniRule"/>
</dbReference>
<dbReference type="GO" id="GO:0019294">
    <property type="term" value="P:keto-3-deoxy-D-manno-octulosonic acid biosynthetic process"/>
    <property type="evidence" value="ECO:0007669"/>
    <property type="project" value="UniProtKB-UniRule"/>
</dbReference>
<dbReference type="FunFam" id="3.20.20.70:FF:000058">
    <property type="entry name" value="2-dehydro-3-deoxyphosphooctonate aldolase"/>
    <property type="match status" value="1"/>
</dbReference>
<dbReference type="Gene3D" id="3.20.20.70">
    <property type="entry name" value="Aldolase class I"/>
    <property type="match status" value="1"/>
</dbReference>
<dbReference type="HAMAP" id="MF_00056">
    <property type="entry name" value="KDO8P_synth"/>
    <property type="match status" value="1"/>
</dbReference>
<dbReference type="InterPro" id="IPR013785">
    <property type="entry name" value="Aldolase_TIM"/>
</dbReference>
<dbReference type="InterPro" id="IPR006218">
    <property type="entry name" value="DAHP1/KDSA"/>
</dbReference>
<dbReference type="InterPro" id="IPR006269">
    <property type="entry name" value="KDO8P_synthase"/>
</dbReference>
<dbReference type="NCBIfam" id="TIGR01362">
    <property type="entry name" value="KDO8P_synth"/>
    <property type="match status" value="1"/>
</dbReference>
<dbReference type="NCBIfam" id="NF003543">
    <property type="entry name" value="PRK05198.1"/>
    <property type="match status" value="1"/>
</dbReference>
<dbReference type="NCBIfam" id="NF009109">
    <property type="entry name" value="PRK12457.1"/>
    <property type="match status" value="1"/>
</dbReference>
<dbReference type="PANTHER" id="PTHR21057">
    <property type="entry name" value="PHOSPHO-2-DEHYDRO-3-DEOXYHEPTONATE ALDOLASE"/>
    <property type="match status" value="1"/>
</dbReference>
<dbReference type="Pfam" id="PF00793">
    <property type="entry name" value="DAHP_synth_1"/>
    <property type="match status" value="1"/>
</dbReference>
<dbReference type="SUPFAM" id="SSF51569">
    <property type="entry name" value="Aldolase"/>
    <property type="match status" value="1"/>
</dbReference>
<organism>
    <name type="scientific">Vibrio vulnificus (strain CMCP6)</name>
    <dbReference type="NCBI Taxonomy" id="216895"/>
    <lineage>
        <taxon>Bacteria</taxon>
        <taxon>Pseudomonadati</taxon>
        <taxon>Pseudomonadota</taxon>
        <taxon>Gammaproteobacteria</taxon>
        <taxon>Vibrionales</taxon>
        <taxon>Vibrionaceae</taxon>
        <taxon>Vibrio</taxon>
    </lineage>
</organism>
<name>KDSA_VIBVU</name>
<reference key="1">
    <citation type="submission" date="2002-12" db="EMBL/GenBank/DDBJ databases">
        <title>Complete genome sequence of Vibrio vulnificus CMCP6.</title>
        <authorList>
            <person name="Rhee J.H."/>
            <person name="Kim S.Y."/>
            <person name="Chung S.S."/>
            <person name="Kim J.J."/>
            <person name="Moon Y.H."/>
            <person name="Jeong H."/>
            <person name="Choy H.E."/>
        </authorList>
    </citation>
    <scope>NUCLEOTIDE SEQUENCE [LARGE SCALE GENOMIC DNA]</scope>
    <source>
        <strain>CMCP6</strain>
    </source>
</reference>
<protein>
    <recommendedName>
        <fullName evidence="1">2-dehydro-3-deoxyphosphooctonate aldolase</fullName>
        <ecNumber evidence="1">2.5.1.55</ecNumber>
    </recommendedName>
    <alternativeName>
        <fullName evidence="1">3-deoxy-D-manno-octulosonic acid 8-phosphate synthase</fullName>
    </alternativeName>
    <alternativeName>
        <fullName evidence="1">KDO-8-phosphate synthase</fullName>
        <shortName evidence="1">KDO 8-P synthase</shortName>
        <shortName evidence="1">KDOPS</shortName>
    </alternativeName>
    <alternativeName>
        <fullName evidence="1">Phospho-2-dehydro-3-deoxyoctonate aldolase</fullName>
    </alternativeName>
</protein>
<accession>Q8DFG3</accession>
<evidence type="ECO:0000255" key="1">
    <source>
        <dbReference type="HAMAP-Rule" id="MF_00056"/>
    </source>
</evidence>
<comment type="catalytic activity">
    <reaction evidence="1">
        <text>D-arabinose 5-phosphate + phosphoenolpyruvate + H2O = 3-deoxy-alpha-D-manno-2-octulosonate-8-phosphate + phosphate</text>
        <dbReference type="Rhea" id="RHEA:14053"/>
        <dbReference type="ChEBI" id="CHEBI:15377"/>
        <dbReference type="ChEBI" id="CHEBI:43474"/>
        <dbReference type="ChEBI" id="CHEBI:57693"/>
        <dbReference type="ChEBI" id="CHEBI:58702"/>
        <dbReference type="ChEBI" id="CHEBI:85985"/>
        <dbReference type="EC" id="2.5.1.55"/>
    </reaction>
</comment>
<comment type="pathway">
    <text evidence="1">Carbohydrate biosynthesis; 3-deoxy-D-manno-octulosonate biosynthesis; 3-deoxy-D-manno-octulosonate from D-ribulose 5-phosphate: step 2/3.</text>
</comment>
<comment type="pathway">
    <text evidence="1">Bacterial outer membrane biogenesis; lipopolysaccharide biosynthesis.</text>
</comment>
<comment type="subcellular location">
    <subcellularLocation>
        <location evidence="1">Cytoplasm</location>
    </subcellularLocation>
</comment>
<comment type="similarity">
    <text evidence="1">Belongs to the KdsA family.</text>
</comment>